<gene>
    <name type="primary">pheS</name>
    <name type="ordered locus">spr0507</name>
</gene>
<proteinExistence type="inferred from homology"/>
<feature type="chain" id="PRO_0000126774" description="Phenylalanine--tRNA ligase alpha subunit">
    <location>
        <begin position="1"/>
        <end position="348"/>
    </location>
</feature>
<feature type="binding site" evidence="1">
    <location>
        <position position="262"/>
    </location>
    <ligand>
        <name>Mg(2+)</name>
        <dbReference type="ChEBI" id="CHEBI:18420"/>
        <note>shared with beta subunit</note>
    </ligand>
</feature>
<accession>Q8DQT8</accession>
<name>SYFA_STRR6</name>
<reference key="1">
    <citation type="journal article" date="2001" name="J. Bacteriol.">
        <title>Genome of the bacterium Streptococcus pneumoniae strain R6.</title>
        <authorList>
            <person name="Hoskins J."/>
            <person name="Alborn W.E. Jr."/>
            <person name="Arnold J."/>
            <person name="Blaszczak L.C."/>
            <person name="Burgett S."/>
            <person name="DeHoff B.S."/>
            <person name="Estrem S.T."/>
            <person name="Fritz L."/>
            <person name="Fu D.-J."/>
            <person name="Fuller W."/>
            <person name="Geringer C."/>
            <person name="Gilmour R."/>
            <person name="Glass J.S."/>
            <person name="Khoja H."/>
            <person name="Kraft A.R."/>
            <person name="Lagace R.E."/>
            <person name="LeBlanc D.J."/>
            <person name="Lee L.N."/>
            <person name="Lefkowitz E.J."/>
            <person name="Lu J."/>
            <person name="Matsushima P."/>
            <person name="McAhren S.M."/>
            <person name="McHenney M."/>
            <person name="McLeaster K."/>
            <person name="Mundy C.W."/>
            <person name="Nicas T.I."/>
            <person name="Norris F.H."/>
            <person name="O'Gara M."/>
            <person name="Peery R.B."/>
            <person name="Robertson G.T."/>
            <person name="Rockey P."/>
            <person name="Sun P.-M."/>
            <person name="Winkler M.E."/>
            <person name="Yang Y."/>
            <person name="Young-Bellido M."/>
            <person name="Zhao G."/>
            <person name="Zook C.A."/>
            <person name="Baltz R.H."/>
            <person name="Jaskunas S.R."/>
            <person name="Rosteck P.R. Jr."/>
            <person name="Skatrud P.L."/>
            <person name="Glass J.I."/>
        </authorList>
    </citation>
    <scope>NUCLEOTIDE SEQUENCE [LARGE SCALE GENOMIC DNA]</scope>
    <source>
        <strain>ATCC BAA-255 / R6</strain>
    </source>
</reference>
<sequence length="348" mass="39132">MSTIEEQLKALREETLTSLKQITAGNEKEMQDLRVSVLGKKGSLTEILKGMKDVSAEMRPIIGKHVNEARDVLTAAFEETAKLLEEKKVAAQLASESIDVTLPGRPVATGHRHVLTQTSEEIEDIFIGMGYQVVDGFEVEQDYYNFERMNLPKDHPARDMQDTFYITEEILLRTHTSPVQARAMDAHDFSKGPLKMISPGRVFRRDTDDATHSHQFHQIEGLVVGKNISMADLQGTLQLIVQKMFGEERQIRLRPSYFPFTEPSVEVDVSCFKCGGEGCNVCKKTGWIEIMGAGMVHPRVLEMSGIDATVYSGFAFGLGQERVAMLRYGINDIRGFYQGDVRFSEQFK</sequence>
<organism>
    <name type="scientific">Streptococcus pneumoniae (strain ATCC BAA-255 / R6)</name>
    <dbReference type="NCBI Taxonomy" id="171101"/>
    <lineage>
        <taxon>Bacteria</taxon>
        <taxon>Bacillati</taxon>
        <taxon>Bacillota</taxon>
        <taxon>Bacilli</taxon>
        <taxon>Lactobacillales</taxon>
        <taxon>Streptococcaceae</taxon>
        <taxon>Streptococcus</taxon>
    </lineage>
</organism>
<comment type="catalytic activity">
    <reaction>
        <text>tRNA(Phe) + L-phenylalanine + ATP = L-phenylalanyl-tRNA(Phe) + AMP + diphosphate + H(+)</text>
        <dbReference type="Rhea" id="RHEA:19413"/>
        <dbReference type="Rhea" id="RHEA-COMP:9668"/>
        <dbReference type="Rhea" id="RHEA-COMP:9699"/>
        <dbReference type="ChEBI" id="CHEBI:15378"/>
        <dbReference type="ChEBI" id="CHEBI:30616"/>
        <dbReference type="ChEBI" id="CHEBI:33019"/>
        <dbReference type="ChEBI" id="CHEBI:58095"/>
        <dbReference type="ChEBI" id="CHEBI:78442"/>
        <dbReference type="ChEBI" id="CHEBI:78531"/>
        <dbReference type="ChEBI" id="CHEBI:456215"/>
        <dbReference type="EC" id="6.1.1.20"/>
    </reaction>
</comment>
<comment type="cofactor">
    <cofactor evidence="1">
        <name>Mg(2+)</name>
        <dbReference type="ChEBI" id="CHEBI:18420"/>
    </cofactor>
    <text evidence="1">Binds 2 magnesium ions per tetramer.</text>
</comment>
<comment type="subunit">
    <text evidence="1">Tetramer of two alpha and two beta subunits.</text>
</comment>
<comment type="subcellular location">
    <subcellularLocation>
        <location evidence="1">Cytoplasm</location>
    </subcellularLocation>
</comment>
<comment type="similarity">
    <text evidence="2">Belongs to the class-II aminoacyl-tRNA synthetase family. Phe-tRNA synthetase alpha subunit type 1 subfamily.</text>
</comment>
<comment type="sequence caution" evidence="2">
    <conflict type="erroneous initiation">
        <sequence resource="EMBL-CDS" id="AAK99311"/>
    </conflict>
</comment>
<dbReference type="EC" id="6.1.1.20"/>
<dbReference type="EMBL" id="AE007317">
    <property type="protein sequence ID" value="AAK99311.1"/>
    <property type="status" value="ALT_INIT"/>
    <property type="molecule type" value="Genomic_DNA"/>
</dbReference>
<dbReference type="PIR" id="C97935">
    <property type="entry name" value="C97935"/>
</dbReference>
<dbReference type="RefSeq" id="NP_358101.2">
    <property type="nucleotide sequence ID" value="NC_003098.1"/>
</dbReference>
<dbReference type="RefSeq" id="WP_001813261.1">
    <property type="nucleotide sequence ID" value="NC_003098.1"/>
</dbReference>
<dbReference type="SMR" id="Q8DQT8"/>
<dbReference type="STRING" id="171101.spr0507"/>
<dbReference type="GeneID" id="45654008"/>
<dbReference type="KEGG" id="spr:spr0507"/>
<dbReference type="PATRIC" id="fig|171101.6.peg.559"/>
<dbReference type="eggNOG" id="COG0016">
    <property type="taxonomic scope" value="Bacteria"/>
</dbReference>
<dbReference type="HOGENOM" id="CLU_025086_0_1_9"/>
<dbReference type="Proteomes" id="UP000000586">
    <property type="component" value="Chromosome"/>
</dbReference>
<dbReference type="GO" id="GO:0005737">
    <property type="term" value="C:cytoplasm"/>
    <property type="evidence" value="ECO:0000318"/>
    <property type="project" value="GO_Central"/>
</dbReference>
<dbReference type="GO" id="GO:0005524">
    <property type="term" value="F:ATP binding"/>
    <property type="evidence" value="ECO:0007669"/>
    <property type="project" value="UniProtKB-UniRule"/>
</dbReference>
<dbReference type="GO" id="GO:0140096">
    <property type="term" value="F:catalytic activity, acting on a protein"/>
    <property type="evidence" value="ECO:0007669"/>
    <property type="project" value="UniProtKB-ARBA"/>
</dbReference>
<dbReference type="GO" id="GO:0000287">
    <property type="term" value="F:magnesium ion binding"/>
    <property type="evidence" value="ECO:0007669"/>
    <property type="project" value="UniProtKB-UniRule"/>
</dbReference>
<dbReference type="GO" id="GO:0004826">
    <property type="term" value="F:phenylalanine-tRNA ligase activity"/>
    <property type="evidence" value="ECO:0000318"/>
    <property type="project" value="GO_Central"/>
</dbReference>
<dbReference type="GO" id="GO:0016740">
    <property type="term" value="F:transferase activity"/>
    <property type="evidence" value="ECO:0007669"/>
    <property type="project" value="UniProtKB-ARBA"/>
</dbReference>
<dbReference type="GO" id="GO:0000049">
    <property type="term" value="F:tRNA binding"/>
    <property type="evidence" value="ECO:0007669"/>
    <property type="project" value="InterPro"/>
</dbReference>
<dbReference type="GO" id="GO:0006432">
    <property type="term" value="P:phenylalanyl-tRNA aminoacylation"/>
    <property type="evidence" value="ECO:0000318"/>
    <property type="project" value="GO_Central"/>
</dbReference>
<dbReference type="CDD" id="cd00496">
    <property type="entry name" value="PheRS_alpha_core"/>
    <property type="match status" value="1"/>
</dbReference>
<dbReference type="FunFam" id="3.30.930.10:FF:000003">
    <property type="entry name" value="Phenylalanine--tRNA ligase alpha subunit"/>
    <property type="match status" value="1"/>
</dbReference>
<dbReference type="Gene3D" id="3.30.930.10">
    <property type="entry name" value="Bira Bifunctional Protein, Domain 2"/>
    <property type="match status" value="1"/>
</dbReference>
<dbReference type="HAMAP" id="MF_00281">
    <property type="entry name" value="Phe_tRNA_synth_alpha1"/>
    <property type="match status" value="1"/>
</dbReference>
<dbReference type="InterPro" id="IPR006195">
    <property type="entry name" value="aa-tRNA-synth_II"/>
</dbReference>
<dbReference type="InterPro" id="IPR045864">
    <property type="entry name" value="aa-tRNA-synth_II/BPL/LPL"/>
</dbReference>
<dbReference type="InterPro" id="IPR004529">
    <property type="entry name" value="Phe-tRNA-synth_IIc_asu"/>
</dbReference>
<dbReference type="InterPro" id="IPR004188">
    <property type="entry name" value="Phe-tRNA_ligase_II_N"/>
</dbReference>
<dbReference type="InterPro" id="IPR022911">
    <property type="entry name" value="Phe_tRNA_ligase_alpha1_bac"/>
</dbReference>
<dbReference type="InterPro" id="IPR002319">
    <property type="entry name" value="Phenylalanyl-tRNA_Synthase"/>
</dbReference>
<dbReference type="InterPro" id="IPR010978">
    <property type="entry name" value="tRNA-bd_arm"/>
</dbReference>
<dbReference type="NCBIfam" id="TIGR00468">
    <property type="entry name" value="pheS"/>
    <property type="match status" value="1"/>
</dbReference>
<dbReference type="PANTHER" id="PTHR11538:SF41">
    <property type="entry name" value="PHENYLALANINE--TRNA LIGASE, MITOCHONDRIAL"/>
    <property type="match status" value="1"/>
</dbReference>
<dbReference type="PANTHER" id="PTHR11538">
    <property type="entry name" value="PHENYLALANYL-TRNA SYNTHETASE"/>
    <property type="match status" value="1"/>
</dbReference>
<dbReference type="Pfam" id="PF02912">
    <property type="entry name" value="Phe_tRNA-synt_N"/>
    <property type="match status" value="1"/>
</dbReference>
<dbReference type="Pfam" id="PF01409">
    <property type="entry name" value="tRNA-synt_2d"/>
    <property type="match status" value="1"/>
</dbReference>
<dbReference type="SUPFAM" id="SSF55681">
    <property type="entry name" value="Class II aaRS and biotin synthetases"/>
    <property type="match status" value="1"/>
</dbReference>
<dbReference type="SUPFAM" id="SSF46589">
    <property type="entry name" value="tRNA-binding arm"/>
    <property type="match status" value="1"/>
</dbReference>
<dbReference type="PROSITE" id="PS50862">
    <property type="entry name" value="AA_TRNA_LIGASE_II"/>
    <property type="match status" value="1"/>
</dbReference>
<keyword id="KW-0030">Aminoacyl-tRNA synthetase</keyword>
<keyword id="KW-0067">ATP-binding</keyword>
<keyword id="KW-0963">Cytoplasm</keyword>
<keyword id="KW-0436">Ligase</keyword>
<keyword id="KW-0460">Magnesium</keyword>
<keyword id="KW-0479">Metal-binding</keyword>
<keyword id="KW-0547">Nucleotide-binding</keyword>
<keyword id="KW-0648">Protein biosynthesis</keyword>
<keyword id="KW-1185">Reference proteome</keyword>
<protein>
    <recommendedName>
        <fullName>Phenylalanine--tRNA ligase alpha subunit</fullName>
        <ecNumber>6.1.1.20</ecNumber>
    </recommendedName>
    <alternativeName>
        <fullName>Phenylalanyl-tRNA synthetase alpha subunit</fullName>
        <shortName>PheRS</shortName>
    </alternativeName>
</protein>
<evidence type="ECO:0000250" key="1"/>
<evidence type="ECO:0000305" key="2"/>